<accession>A1K9L5</accession>
<evidence type="ECO:0000255" key="1">
    <source>
        <dbReference type="HAMAP-Rule" id="MF_00181"/>
    </source>
</evidence>
<organism>
    <name type="scientific">Azoarcus sp. (strain BH72)</name>
    <dbReference type="NCBI Taxonomy" id="418699"/>
    <lineage>
        <taxon>Bacteria</taxon>
        <taxon>Pseudomonadati</taxon>
        <taxon>Pseudomonadota</taxon>
        <taxon>Betaproteobacteria</taxon>
        <taxon>Rhodocyclales</taxon>
        <taxon>Zoogloeaceae</taxon>
        <taxon>Azoarcus</taxon>
    </lineage>
</organism>
<protein>
    <recommendedName>
        <fullName evidence="1">Probable cytosol aminopeptidase</fullName>
        <ecNumber evidence="1">3.4.11.1</ecNumber>
    </recommendedName>
    <alternativeName>
        <fullName evidence="1">Leucine aminopeptidase</fullName>
        <shortName evidence="1">LAP</shortName>
        <ecNumber evidence="1">3.4.11.10</ecNumber>
    </alternativeName>
    <alternativeName>
        <fullName evidence="1">Leucyl aminopeptidase</fullName>
    </alternativeName>
</protein>
<feature type="chain" id="PRO_1000019879" description="Probable cytosol aminopeptidase">
    <location>
        <begin position="1"/>
        <end position="500"/>
    </location>
</feature>
<feature type="active site" evidence="1">
    <location>
        <position position="280"/>
    </location>
</feature>
<feature type="active site" evidence="1">
    <location>
        <position position="354"/>
    </location>
</feature>
<feature type="binding site" evidence="1">
    <location>
        <position position="268"/>
    </location>
    <ligand>
        <name>Mn(2+)</name>
        <dbReference type="ChEBI" id="CHEBI:29035"/>
        <label>2</label>
    </ligand>
</feature>
<feature type="binding site" evidence="1">
    <location>
        <position position="273"/>
    </location>
    <ligand>
        <name>Mn(2+)</name>
        <dbReference type="ChEBI" id="CHEBI:29035"/>
        <label>1</label>
    </ligand>
</feature>
<feature type="binding site" evidence="1">
    <location>
        <position position="273"/>
    </location>
    <ligand>
        <name>Mn(2+)</name>
        <dbReference type="ChEBI" id="CHEBI:29035"/>
        <label>2</label>
    </ligand>
</feature>
<feature type="binding site" evidence="1">
    <location>
        <position position="291"/>
    </location>
    <ligand>
        <name>Mn(2+)</name>
        <dbReference type="ChEBI" id="CHEBI:29035"/>
        <label>2</label>
    </ligand>
</feature>
<feature type="binding site" evidence="1">
    <location>
        <position position="350"/>
    </location>
    <ligand>
        <name>Mn(2+)</name>
        <dbReference type="ChEBI" id="CHEBI:29035"/>
        <label>1</label>
    </ligand>
</feature>
<feature type="binding site" evidence="1">
    <location>
        <position position="352"/>
    </location>
    <ligand>
        <name>Mn(2+)</name>
        <dbReference type="ChEBI" id="CHEBI:29035"/>
        <label>1</label>
    </ligand>
</feature>
<feature type="binding site" evidence="1">
    <location>
        <position position="352"/>
    </location>
    <ligand>
        <name>Mn(2+)</name>
        <dbReference type="ChEBI" id="CHEBI:29035"/>
        <label>2</label>
    </ligand>
</feature>
<proteinExistence type="inferred from homology"/>
<comment type="function">
    <text evidence="1">Presumably involved in the processing and regular turnover of intracellular proteins. Catalyzes the removal of unsubstituted N-terminal amino acids from various peptides.</text>
</comment>
<comment type="catalytic activity">
    <reaction evidence="1">
        <text>Release of an N-terminal amino acid, Xaa-|-Yaa-, in which Xaa is preferably Leu, but may be other amino acids including Pro although not Arg or Lys, and Yaa may be Pro. Amino acid amides and methyl esters are also readily hydrolyzed, but rates on arylamides are exceedingly low.</text>
        <dbReference type="EC" id="3.4.11.1"/>
    </reaction>
</comment>
<comment type="catalytic activity">
    <reaction evidence="1">
        <text>Release of an N-terminal amino acid, preferentially leucine, but not glutamic or aspartic acids.</text>
        <dbReference type="EC" id="3.4.11.10"/>
    </reaction>
</comment>
<comment type="cofactor">
    <cofactor evidence="1">
        <name>Mn(2+)</name>
        <dbReference type="ChEBI" id="CHEBI:29035"/>
    </cofactor>
    <text evidence="1">Binds 2 manganese ions per subunit.</text>
</comment>
<comment type="subcellular location">
    <subcellularLocation>
        <location evidence="1">Cytoplasm</location>
    </subcellularLocation>
</comment>
<comment type="similarity">
    <text evidence="1">Belongs to the peptidase M17 family.</text>
</comment>
<name>AMPA_AZOSB</name>
<dbReference type="EC" id="3.4.11.1" evidence="1"/>
<dbReference type="EC" id="3.4.11.10" evidence="1"/>
<dbReference type="EMBL" id="AM406670">
    <property type="protein sequence ID" value="CAL95520.1"/>
    <property type="molecule type" value="Genomic_DNA"/>
</dbReference>
<dbReference type="RefSeq" id="WP_011766630.1">
    <property type="nucleotide sequence ID" value="NC_008702.1"/>
</dbReference>
<dbReference type="SMR" id="A1K9L5"/>
<dbReference type="STRING" id="62928.azo2904"/>
<dbReference type="MEROPS" id="M17.003"/>
<dbReference type="KEGG" id="azo:azo2904"/>
<dbReference type="eggNOG" id="COG0260">
    <property type="taxonomic scope" value="Bacteria"/>
</dbReference>
<dbReference type="HOGENOM" id="CLU_013734_2_2_4"/>
<dbReference type="Proteomes" id="UP000002588">
    <property type="component" value="Chromosome"/>
</dbReference>
<dbReference type="GO" id="GO:0005737">
    <property type="term" value="C:cytoplasm"/>
    <property type="evidence" value="ECO:0007669"/>
    <property type="project" value="UniProtKB-SubCell"/>
</dbReference>
<dbReference type="GO" id="GO:0030145">
    <property type="term" value="F:manganese ion binding"/>
    <property type="evidence" value="ECO:0007669"/>
    <property type="project" value="UniProtKB-UniRule"/>
</dbReference>
<dbReference type="GO" id="GO:0070006">
    <property type="term" value="F:metalloaminopeptidase activity"/>
    <property type="evidence" value="ECO:0007669"/>
    <property type="project" value="InterPro"/>
</dbReference>
<dbReference type="GO" id="GO:0006508">
    <property type="term" value="P:proteolysis"/>
    <property type="evidence" value="ECO:0007669"/>
    <property type="project" value="UniProtKB-KW"/>
</dbReference>
<dbReference type="CDD" id="cd00433">
    <property type="entry name" value="Peptidase_M17"/>
    <property type="match status" value="1"/>
</dbReference>
<dbReference type="FunFam" id="3.40.630.10:FF:000004">
    <property type="entry name" value="Probable cytosol aminopeptidase"/>
    <property type="match status" value="1"/>
</dbReference>
<dbReference type="Gene3D" id="3.40.220.10">
    <property type="entry name" value="Leucine Aminopeptidase, subunit E, domain 1"/>
    <property type="match status" value="1"/>
</dbReference>
<dbReference type="Gene3D" id="3.40.630.10">
    <property type="entry name" value="Zn peptidases"/>
    <property type="match status" value="1"/>
</dbReference>
<dbReference type="HAMAP" id="MF_00181">
    <property type="entry name" value="Cytosol_peptidase_M17"/>
    <property type="match status" value="1"/>
</dbReference>
<dbReference type="InterPro" id="IPR011356">
    <property type="entry name" value="Leucine_aapep/pepB"/>
</dbReference>
<dbReference type="InterPro" id="IPR043472">
    <property type="entry name" value="Macro_dom-like"/>
</dbReference>
<dbReference type="InterPro" id="IPR000819">
    <property type="entry name" value="Peptidase_M17_C"/>
</dbReference>
<dbReference type="InterPro" id="IPR023042">
    <property type="entry name" value="Peptidase_M17_leu_NH2_pept"/>
</dbReference>
<dbReference type="InterPro" id="IPR008283">
    <property type="entry name" value="Peptidase_M17_N"/>
</dbReference>
<dbReference type="NCBIfam" id="NF002073">
    <property type="entry name" value="PRK00913.1-2"/>
    <property type="match status" value="1"/>
</dbReference>
<dbReference type="NCBIfam" id="NF002074">
    <property type="entry name" value="PRK00913.1-4"/>
    <property type="match status" value="1"/>
</dbReference>
<dbReference type="NCBIfam" id="NF002077">
    <property type="entry name" value="PRK00913.2-4"/>
    <property type="match status" value="1"/>
</dbReference>
<dbReference type="PANTHER" id="PTHR11963:SF23">
    <property type="entry name" value="CYTOSOL AMINOPEPTIDASE"/>
    <property type="match status" value="1"/>
</dbReference>
<dbReference type="PANTHER" id="PTHR11963">
    <property type="entry name" value="LEUCINE AMINOPEPTIDASE-RELATED"/>
    <property type="match status" value="1"/>
</dbReference>
<dbReference type="Pfam" id="PF00883">
    <property type="entry name" value="Peptidase_M17"/>
    <property type="match status" value="1"/>
</dbReference>
<dbReference type="Pfam" id="PF02789">
    <property type="entry name" value="Peptidase_M17_N"/>
    <property type="match status" value="1"/>
</dbReference>
<dbReference type="PRINTS" id="PR00481">
    <property type="entry name" value="LAMNOPPTDASE"/>
</dbReference>
<dbReference type="SUPFAM" id="SSF52949">
    <property type="entry name" value="Macro domain-like"/>
    <property type="match status" value="1"/>
</dbReference>
<dbReference type="SUPFAM" id="SSF53187">
    <property type="entry name" value="Zn-dependent exopeptidases"/>
    <property type="match status" value="1"/>
</dbReference>
<dbReference type="PROSITE" id="PS00631">
    <property type="entry name" value="CYTOSOL_AP"/>
    <property type="match status" value="1"/>
</dbReference>
<gene>
    <name evidence="1" type="primary">pepA</name>
    <name type="ordered locus">azo2904</name>
</gene>
<reference key="1">
    <citation type="journal article" date="2006" name="Nat. Biotechnol.">
        <title>Complete genome of the mutualistic, N2-fixing grass endophyte Azoarcus sp. strain BH72.</title>
        <authorList>
            <person name="Krause A."/>
            <person name="Ramakumar A."/>
            <person name="Bartels D."/>
            <person name="Battistoni F."/>
            <person name="Bekel T."/>
            <person name="Boch J."/>
            <person name="Boehm M."/>
            <person name="Friedrich F."/>
            <person name="Hurek T."/>
            <person name="Krause L."/>
            <person name="Linke B."/>
            <person name="McHardy A.C."/>
            <person name="Sarkar A."/>
            <person name="Schneiker S."/>
            <person name="Syed A.A."/>
            <person name="Thauer R."/>
            <person name="Vorhoelter F.-J."/>
            <person name="Weidner S."/>
            <person name="Puehler A."/>
            <person name="Reinhold-Hurek B."/>
            <person name="Kaiser O."/>
            <person name="Goesmann A."/>
        </authorList>
    </citation>
    <scope>NUCLEOTIDE SEQUENCE [LARGE SCALE GENOMIC DNA]</scope>
    <source>
        <strain>BH72</strain>
    </source>
</reference>
<sequence>MEFTIKTATPEKVRTGVLVVGLFADGILPPAAHAVDKASKGKLAQLVKRGDLDEKAGAAVMLHDLAGIAAERVLVVSLGKSAEFSDKAYRDALNSVAKALASGVAKVAAVAIADAELDGRTLAWRLQQATRQIADGAYRFDAPKAGAKDAKKERGARKITLLIGDKVSDELEAAVRRGQAVAEGMALAKDLGNLPGNVCTPAYLADTAEALGKQFKFDVEVLERADMEKLGMGSLLSVAKGSHIPPKFIVMHYKGGKSKAKPVVLVGKGITFDTGGISLKPGAEMDEMKYDMCGAASVLGTFKAIARMALPLNVVGIVPATENMPGGNATRPGDVVTSMSGQTIEILNTDAEGRLILCDALTYAERFKPACVIDIATLTGACVVALGKIPSGLLANDDDLAAELLKRGTESGDRAWQLPLWDEYQDLLKSNFADMANIGGRYGGTITAACFLARFTKAYKWAHLDIAGTAWVSGDAKGATGRPVPLLAEFLVGRAAAKAD</sequence>
<keyword id="KW-0031">Aminopeptidase</keyword>
<keyword id="KW-0963">Cytoplasm</keyword>
<keyword id="KW-0378">Hydrolase</keyword>
<keyword id="KW-0464">Manganese</keyword>
<keyword id="KW-0479">Metal-binding</keyword>
<keyword id="KW-0645">Protease</keyword>
<keyword id="KW-1185">Reference proteome</keyword>